<dbReference type="EC" id="2.7.7.6" evidence="1"/>
<dbReference type="EMBL" id="AL766853">
    <property type="protein sequence ID" value="CAD47462.1"/>
    <property type="molecule type" value="Genomic_DNA"/>
</dbReference>
<dbReference type="RefSeq" id="WP_000639570.1">
    <property type="nucleotide sequence ID" value="NC_004368.1"/>
</dbReference>
<dbReference type="SMR" id="Q8E3F6"/>
<dbReference type="KEGG" id="san:gbs1803"/>
<dbReference type="eggNOG" id="COG5503">
    <property type="taxonomic scope" value="Bacteria"/>
</dbReference>
<dbReference type="HOGENOM" id="CLU_187518_0_0_9"/>
<dbReference type="Proteomes" id="UP000000823">
    <property type="component" value="Chromosome"/>
</dbReference>
<dbReference type="GO" id="GO:0000428">
    <property type="term" value="C:DNA-directed RNA polymerase complex"/>
    <property type="evidence" value="ECO:0007669"/>
    <property type="project" value="UniProtKB-KW"/>
</dbReference>
<dbReference type="GO" id="GO:0003677">
    <property type="term" value="F:DNA binding"/>
    <property type="evidence" value="ECO:0007669"/>
    <property type="project" value="UniProtKB-UniRule"/>
</dbReference>
<dbReference type="GO" id="GO:0003899">
    <property type="term" value="F:DNA-directed RNA polymerase activity"/>
    <property type="evidence" value="ECO:0007669"/>
    <property type="project" value="UniProtKB-UniRule"/>
</dbReference>
<dbReference type="GO" id="GO:0006351">
    <property type="term" value="P:DNA-templated transcription"/>
    <property type="evidence" value="ECO:0007669"/>
    <property type="project" value="UniProtKB-UniRule"/>
</dbReference>
<dbReference type="Gene3D" id="3.10.20.730">
    <property type="entry name" value="RNAP, epsilon subunit-like"/>
    <property type="match status" value="1"/>
</dbReference>
<dbReference type="HAMAP" id="MF_01553">
    <property type="entry name" value="RNApol_bact_RpoY"/>
    <property type="match status" value="1"/>
</dbReference>
<dbReference type="InterPro" id="IPR009907">
    <property type="entry name" value="RpoY"/>
</dbReference>
<dbReference type="NCBIfam" id="NF010188">
    <property type="entry name" value="PRK13667.1"/>
    <property type="match status" value="1"/>
</dbReference>
<dbReference type="Pfam" id="PF07288">
    <property type="entry name" value="RpoY"/>
    <property type="match status" value="1"/>
</dbReference>
<gene>
    <name evidence="1" type="primary">rpoY</name>
    <name type="ordered locus">gbs1803</name>
</gene>
<organism>
    <name type="scientific">Streptococcus agalactiae serotype III (strain NEM316)</name>
    <dbReference type="NCBI Taxonomy" id="211110"/>
    <lineage>
        <taxon>Bacteria</taxon>
        <taxon>Bacillati</taxon>
        <taxon>Bacillota</taxon>
        <taxon>Bacilli</taxon>
        <taxon>Lactobacillales</taxon>
        <taxon>Streptococcaceae</taxon>
        <taxon>Streptococcus</taxon>
    </lineage>
</organism>
<evidence type="ECO:0000255" key="1">
    <source>
        <dbReference type="HAMAP-Rule" id="MF_01553"/>
    </source>
</evidence>
<name>RPOY_STRA3</name>
<accession>Q8E3F6</accession>
<protein>
    <recommendedName>
        <fullName evidence="1">DNA-directed RNA polymerase subunit epsilon</fullName>
        <shortName evidence="1">RNAP epsilon subunit</shortName>
        <ecNumber evidence="1">2.7.7.6</ecNumber>
    </recommendedName>
    <alternativeName>
        <fullName evidence="1">RNA polymerase epsilon subunit</fullName>
    </alternativeName>
    <alternativeName>
        <fullName evidence="1">Transcriptase subunit epsilon</fullName>
    </alternativeName>
</protein>
<reference key="1">
    <citation type="journal article" date="2002" name="Mol. Microbiol.">
        <title>Genome sequence of Streptococcus agalactiae, a pathogen causing invasive neonatal disease.</title>
        <authorList>
            <person name="Glaser P."/>
            <person name="Rusniok C."/>
            <person name="Buchrieser C."/>
            <person name="Chevalier F."/>
            <person name="Frangeul L."/>
            <person name="Msadek T."/>
            <person name="Zouine M."/>
            <person name="Couve E."/>
            <person name="Lalioui L."/>
            <person name="Poyart C."/>
            <person name="Trieu-Cuot P."/>
            <person name="Kunst F."/>
        </authorList>
    </citation>
    <scope>NUCLEOTIDE SEQUENCE [LARGE SCALE GENOMIC DNA]</scope>
    <source>
        <strain>NEM316</strain>
    </source>
</reference>
<proteinExistence type="inferred from homology"/>
<comment type="function">
    <text evidence="1">A non-essential component of RNA polymerase (RNAP).</text>
</comment>
<comment type="catalytic activity">
    <reaction evidence="1">
        <text>RNA(n) + a ribonucleoside 5'-triphosphate = RNA(n+1) + diphosphate</text>
        <dbReference type="Rhea" id="RHEA:21248"/>
        <dbReference type="Rhea" id="RHEA-COMP:14527"/>
        <dbReference type="Rhea" id="RHEA-COMP:17342"/>
        <dbReference type="ChEBI" id="CHEBI:33019"/>
        <dbReference type="ChEBI" id="CHEBI:61557"/>
        <dbReference type="ChEBI" id="CHEBI:140395"/>
        <dbReference type="EC" id="2.7.7.6"/>
    </reaction>
</comment>
<comment type="subunit">
    <text evidence="1">RNAP is composed of a core of 2 alpha, a beta and a beta' subunit. The core is associated with a delta subunit, and at least one of epsilon or omega. When a sigma factor is associated with the core the holoenzyme is formed, which can initiate transcription.</text>
</comment>
<comment type="similarity">
    <text evidence="1">Belongs to the RNA polymerase subunit epsilon family.</text>
</comment>
<sequence length="76" mass="9107">MIYKVFYQETKERNPRREQTKTLYVTIDAANELEGRIAARKLVEENTAYNIEFIELLSDKHLEYEKETGVFELTEF</sequence>
<feature type="chain" id="PRO_0000163144" description="DNA-directed RNA polymerase subunit epsilon">
    <location>
        <begin position="1"/>
        <end position="76"/>
    </location>
</feature>
<keyword id="KW-0240">DNA-directed RNA polymerase</keyword>
<keyword id="KW-0548">Nucleotidyltransferase</keyword>
<keyword id="KW-0804">Transcription</keyword>
<keyword id="KW-0808">Transferase</keyword>